<protein>
    <recommendedName>
        <fullName evidence="1">Anthranilate phosphoribosyltransferase</fullName>
        <ecNumber evidence="1">2.4.2.18</ecNumber>
    </recommendedName>
</protein>
<gene>
    <name evidence="1" type="primary">trpD</name>
    <name type="ordered locus">SPCG_1799</name>
</gene>
<reference key="1">
    <citation type="journal article" date="2009" name="BMC Genomics">
        <title>Genome evolution driven by host adaptations results in a more virulent and antimicrobial-resistant Streptococcus pneumoniae serotype 14.</title>
        <authorList>
            <person name="Ding F."/>
            <person name="Tang P."/>
            <person name="Hsu M.-H."/>
            <person name="Cui P."/>
            <person name="Hu S."/>
            <person name="Yu J."/>
            <person name="Chiu C.-H."/>
        </authorList>
    </citation>
    <scope>NUCLEOTIDE SEQUENCE [LARGE SCALE GENOMIC DNA]</scope>
    <source>
        <strain>CGSP14</strain>
    </source>
</reference>
<name>TRPD_STRPS</name>
<proteinExistence type="inferred from homology"/>
<organism>
    <name type="scientific">Streptococcus pneumoniae (strain CGSP14)</name>
    <dbReference type="NCBI Taxonomy" id="516950"/>
    <lineage>
        <taxon>Bacteria</taxon>
        <taxon>Bacillati</taxon>
        <taxon>Bacillota</taxon>
        <taxon>Bacilli</taxon>
        <taxon>Lactobacillales</taxon>
        <taxon>Streptococcaceae</taxon>
        <taxon>Streptococcus</taxon>
    </lineage>
</organism>
<keyword id="KW-0028">Amino-acid biosynthesis</keyword>
<keyword id="KW-0057">Aromatic amino acid biosynthesis</keyword>
<keyword id="KW-0328">Glycosyltransferase</keyword>
<keyword id="KW-0460">Magnesium</keyword>
<keyword id="KW-0479">Metal-binding</keyword>
<keyword id="KW-0808">Transferase</keyword>
<keyword id="KW-0822">Tryptophan biosynthesis</keyword>
<dbReference type="EC" id="2.4.2.18" evidence="1"/>
<dbReference type="EMBL" id="CP001033">
    <property type="protein sequence ID" value="ACB91051.1"/>
    <property type="molecule type" value="Genomic_DNA"/>
</dbReference>
<dbReference type="RefSeq" id="WP_000658684.1">
    <property type="nucleotide sequence ID" value="NC_010582.1"/>
</dbReference>
<dbReference type="SMR" id="B2ISS4"/>
<dbReference type="GeneID" id="45652966"/>
<dbReference type="KEGG" id="spw:SPCG_1799"/>
<dbReference type="HOGENOM" id="CLU_034315_2_1_9"/>
<dbReference type="UniPathway" id="UPA00035">
    <property type="reaction ID" value="UER00041"/>
</dbReference>
<dbReference type="GO" id="GO:0005829">
    <property type="term" value="C:cytosol"/>
    <property type="evidence" value="ECO:0007669"/>
    <property type="project" value="TreeGrafter"/>
</dbReference>
<dbReference type="GO" id="GO:0004048">
    <property type="term" value="F:anthranilate phosphoribosyltransferase activity"/>
    <property type="evidence" value="ECO:0007669"/>
    <property type="project" value="UniProtKB-UniRule"/>
</dbReference>
<dbReference type="GO" id="GO:0000287">
    <property type="term" value="F:magnesium ion binding"/>
    <property type="evidence" value="ECO:0007669"/>
    <property type="project" value="UniProtKB-UniRule"/>
</dbReference>
<dbReference type="GO" id="GO:0000162">
    <property type="term" value="P:L-tryptophan biosynthetic process"/>
    <property type="evidence" value="ECO:0007669"/>
    <property type="project" value="UniProtKB-UniRule"/>
</dbReference>
<dbReference type="FunFam" id="3.40.1030.10:FF:000002">
    <property type="entry name" value="Anthranilate phosphoribosyltransferase"/>
    <property type="match status" value="1"/>
</dbReference>
<dbReference type="Gene3D" id="3.40.1030.10">
    <property type="entry name" value="Nucleoside phosphorylase/phosphoribosyltransferase catalytic domain"/>
    <property type="match status" value="1"/>
</dbReference>
<dbReference type="Gene3D" id="1.20.970.10">
    <property type="entry name" value="Transferase, Pyrimidine Nucleoside Phosphorylase, Chain C"/>
    <property type="match status" value="1"/>
</dbReference>
<dbReference type="HAMAP" id="MF_00211">
    <property type="entry name" value="TrpD"/>
    <property type="match status" value="1"/>
</dbReference>
<dbReference type="InterPro" id="IPR005940">
    <property type="entry name" value="Anthranilate_Pribosyl_Tfrase"/>
</dbReference>
<dbReference type="InterPro" id="IPR000312">
    <property type="entry name" value="Glycosyl_Trfase_fam3"/>
</dbReference>
<dbReference type="InterPro" id="IPR017459">
    <property type="entry name" value="Glycosyl_Trfase_fam3_N_dom"/>
</dbReference>
<dbReference type="InterPro" id="IPR036320">
    <property type="entry name" value="Glycosyl_Trfase_fam3_N_dom_sf"/>
</dbReference>
<dbReference type="InterPro" id="IPR035902">
    <property type="entry name" value="Nuc_phospho_transferase"/>
</dbReference>
<dbReference type="NCBIfam" id="TIGR01245">
    <property type="entry name" value="trpD"/>
    <property type="match status" value="1"/>
</dbReference>
<dbReference type="PANTHER" id="PTHR43285">
    <property type="entry name" value="ANTHRANILATE PHOSPHORIBOSYLTRANSFERASE"/>
    <property type="match status" value="1"/>
</dbReference>
<dbReference type="PANTHER" id="PTHR43285:SF2">
    <property type="entry name" value="ANTHRANILATE PHOSPHORIBOSYLTRANSFERASE"/>
    <property type="match status" value="1"/>
</dbReference>
<dbReference type="Pfam" id="PF02885">
    <property type="entry name" value="Glycos_trans_3N"/>
    <property type="match status" value="1"/>
</dbReference>
<dbReference type="Pfam" id="PF00591">
    <property type="entry name" value="Glycos_transf_3"/>
    <property type="match status" value="1"/>
</dbReference>
<dbReference type="SUPFAM" id="SSF52418">
    <property type="entry name" value="Nucleoside phosphorylase/phosphoribosyltransferase catalytic domain"/>
    <property type="match status" value="1"/>
</dbReference>
<dbReference type="SUPFAM" id="SSF47648">
    <property type="entry name" value="Nucleoside phosphorylase/phosphoribosyltransferase N-terminal domain"/>
    <property type="match status" value="1"/>
</dbReference>
<feature type="chain" id="PRO_1000099851" description="Anthranilate phosphoribosyltransferase">
    <location>
        <begin position="1"/>
        <end position="334"/>
    </location>
</feature>
<feature type="binding site" evidence="1">
    <location>
        <position position="79"/>
    </location>
    <ligand>
        <name>5-phospho-alpha-D-ribose 1-diphosphate</name>
        <dbReference type="ChEBI" id="CHEBI:58017"/>
    </ligand>
</feature>
<feature type="binding site" evidence="1">
    <location>
        <position position="79"/>
    </location>
    <ligand>
        <name>anthranilate</name>
        <dbReference type="ChEBI" id="CHEBI:16567"/>
        <label>1</label>
    </ligand>
</feature>
<feature type="binding site" evidence="1">
    <location>
        <begin position="82"/>
        <end position="83"/>
    </location>
    <ligand>
        <name>5-phospho-alpha-D-ribose 1-diphosphate</name>
        <dbReference type="ChEBI" id="CHEBI:58017"/>
    </ligand>
</feature>
<feature type="binding site" evidence="1">
    <location>
        <position position="87"/>
    </location>
    <ligand>
        <name>5-phospho-alpha-D-ribose 1-diphosphate</name>
        <dbReference type="ChEBI" id="CHEBI:58017"/>
    </ligand>
</feature>
<feature type="binding site" evidence="1">
    <location>
        <begin position="89"/>
        <end position="92"/>
    </location>
    <ligand>
        <name>5-phospho-alpha-D-ribose 1-diphosphate</name>
        <dbReference type="ChEBI" id="CHEBI:58017"/>
    </ligand>
</feature>
<feature type="binding site" evidence="1">
    <location>
        <position position="91"/>
    </location>
    <ligand>
        <name>Mg(2+)</name>
        <dbReference type="ChEBI" id="CHEBI:18420"/>
        <label>1</label>
    </ligand>
</feature>
<feature type="binding site" evidence="1">
    <location>
        <begin position="107"/>
        <end position="115"/>
    </location>
    <ligand>
        <name>5-phospho-alpha-D-ribose 1-diphosphate</name>
        <dbReference type="ChEBI" id="CHEBI:58017"/>
    </ligand>
</feature>
<feature type="binding site" evidence="1">
    <location>
        <position position="110"/>
    </location>
    <ligand>
        <name>anthranilate</name>
        <dbReference type="ChEBI" id="CHEBI:16567"/>
        <label>1</label>
    </ligand>
</feature>
<feature type="binding site" evidence="1">
    <location>
        <position position="119"/>
    </location>
    <ligand>
        <name>5-phospho-alpha-D-ribose 1-diphosphate</name>
        <dbReference type="ChEBI" id="CHEBI:58017"/>
    </ligand>
</feature>
<feature type="binding site" evidence="1">
    <location>
        <position position="165"/>
    </location>
    <ligand>
        <name>anthranilate</name>
        <dbReference type="ChEBI" id="CHEBI:16567"/>
        <label>2</label>
    </ligand>
</feature>
<feature type="binding site" evidence="1">
    <location>
        <position position="224"/>
    </location>
    <ligand>
        <name>Mg(2+)</name>
        <dbReference type="ChEBI" id="CHEBI:18420"/>
        <label>2</label>
    </ligand>
</feature>
<feature type="binding site" evidence="1">
    <location>
        <position position="225"/>
    </location>
    <ligand>
        <name>Mg(2+)</name>
        <dbReference type="ChEBI" id="CHEBI:18420"/>
        <label>1</label>
    </ligand>
</feature>
<feature type="binding site" evidence="1">
    <location>
        <position position="225"/>
    </location>
    <ligand>
        <name>Mg(2+)</name>
        <dbReference type="ChEBI" id="CHEBI:18420"/>
        <label>2</label>
    </ligand>
</feature>
<comment type="function">
    <text evidence="1">Catalyzes the transfer of the phosphoribosyl group of 5-phosphorylribose-1-pyrophosphate (PRPP) to anthranilate to yield N-(5'-phosphoribosyl)-anthranilate (PRA).</text>
</comment>
<comment type="catalytic activity">
    <reaction evidence="1">
        <text>N-(5-phospho-beta-D-ribosyl)anthranilate + diphosphate = 5-phospho-alpha-D-ribose 1-diphosphate + anthranilate</text>
        <dbReference type="Rhea" id="RHEA:11768"/>
        <dbReference type="ChEBI" id="CHEBI:16567"/>
        <dbReference type="ChEBI" id="CHEBI:18277"/>
        <dbReference type="ChEBI" id="CHEBI:33019"/>
        <dbReference type="ChEBI" id="CHEBI:58017"/>
        <dbReference type="EC" id="2.4.2.18"/>
    </reaction>
</comment>
<comment type="cofactor">
    <cofactor evidence="1">
        <name>Mg(2+)</name>
        <dbReference type="ChEBI" id="CHEBI:18420"/>
    </cofactor>
    <text evidence="1">Binds 2 magnesium ions per monomer.</text>
</comment>
<comment type="pathway">
    <text evidence="1">Amino-acid biosynthesis; L-tryptophan biosynthesis; L-tryptophan from chorismate: step 2/5.</text>
</comment>
<comment type="subunit">
    <text evidence="1">Homodimer.</text>
</comment>
<comment type="similarity">
    <text evidence="1">Belongs to the anthranilate phosphoribosyltransferase family.</text>
</comment>
<evidence type="ECO:0000255" key="1">
    <source>
        <dbReference type="HAMAP-Rule" id="MF_00211"/>
    </source>
</evidence>
<sequence>MKEIIEKLAKFENLSGVEMTDVIERIVTGRVTEAQIASLLLALKMKGETPEERTAIAQVMRGHAQHIPTEIHDAMDNCGTGGDKSFSFNISTTAAFVLAGGGIHMAKHGNRSISSKSGSADVLEALGINLDLKPAELGKVFDKTGIVFLFAKNMHPAMKYIMPARLELGIPTIMNLTGPLIHPMALETQLLGISRPELLESTAQVLKNMGRKRAIVVAGPEGLDEAGLNGTTKIALLENGEISLSSFTPEDLGMEGYAMEDIRGGNAQENAEILLSVLKNEASPFLETTVLNAGLGFYANGKIDSIKEGVALARQVIARGKALEKLRLLQEYQK</sequence>
<accession>B2ISS4</accession>